<gene>
    <name evidence="1" type="primary">apaG</name>
    <name type="ordered locus">Xfasm12_1353</name>
</gene>
<organism>
    <name type="scientific">Xylella fastidiosa (strain M12)</name>
    <dbReference type="NCBI Taxonomy" id="405440"/>
    <lineage>
        <taxon>Bacteria</taxon>
        <taxon>Pseudomonadati</taxon>
        <taxon>Pseudomonadota</taxon>
        <taxon>Gammaproteobacteria</taxon>
        <taxon>Lysobacterales</taxon>
        <taxon>Lysobacteraceae</taxon>
        <taxon>Xylella</taxon>
    </lineage>
</organism>
<accession>B0U354</accession>
<protein>
    <recommendedName>
        <fullName evidence="1">Protein ApaG</fullName>
    </recommendedName>
</protein>
<feature type="chain" id="PRO_1000133823" description="Protein ApaG">
    <location>
        <begin position="1"/>
        <end position="127"/>
    </location>
</feature>
<feature type="domain" description="ApaG" evidence="1">
    <location>
        <begin position="3"/>
        <end position="127"/>
    </location>
</feature>
<proteinExistence type="inferred from homology"/>
<evidence type="ECO:0000255" key="1">
    <source>
        <dbReference type="HAMAP-Rule" id="MF_00791"/>
    </source>
</evidence>
<reference key="1">
    <citation type="journal article" date="2010" name="J. Bacteriol.">
        <title>Whole genome sequences of two Xylella fastidiosa strains (M12 and M23) causing almond leaf scorch disease in California.</title>
        <authorList>
            <person name="Chen J."/>
            <person name="Xie G."/>
            <person name="Han S."/>
            <person name="Chertkov O."/>
            <person name="Sims D."/>
            <person name="Civerolo E.L."/>
        </authorList>
    </citation>
    <scope>NUCLEOTIDE SEQUENCE [LARGE SCALE GENOMIC DNA]</scope>
    <source>
        <strain>M12</strain>
    </source>
</reference>
<sequence length="127" mass="14240">MENNPSSKIEVAVSSRFLDQQSNRNEGRYVFAYTIRIYNAGNVPARLIARHWQITDANGKVEYVTGEGVIGEQPRLRPGEEFRYTSGVVLGTEQGQMQGHYDMMADDGTEFTATISPFVLSVPRTLH</sequence>
<dbReference type="EMBL" id="CP000941">
    <property type="protein sequence ID" value="ACA12283.1"/>
    <property type="molecule type" value="Genomic_DNA"/>
</dbReference>
<dbReference type="RefSeq" id="WP_004086104.1">
    <property type="nucleotide sequence ID" value="NC_010513.1"/>
</dbReference>
<dbReference type="SMR" id="B0U354"/>
<dbReference type="KEGG" id="xfm:Xfasm12_1353"/>
<dbReference type="HOGENOM" id="CLU_128074_1_0_6"/>
<dbReference type="GO" id="GO:0070987">
    <property type="term" value="P:error-free translesion synthesis"/>
    <property type="evidence" value="ECO:0007669"/>
    <property type="project" value="TreeGrafter"/>
</dbReference>
<dbReference type="Gene3D" id="2.60.40.1470">
    <property type="entry name" value="ApaG domain"/>
    <property type="match status" value="1"/>
</dbReference>
<dbReference type="HAMAP" id="MF_00791">
    <property type="entry name" value="ApaG"/>
    <property type="match status" value="1"/>
</dbReference>
<dbReference type="InterPro" id="IPR007474">
    <property type="entry name" value="ApaG_domain"/>
</dbReference>
<dbReference type="InterPro" id="IPR036767">
    <property type="entry name" value="ApaG_sf"/>
</dbReference>
<dbReference type="InterPro" id="IPR023065">
    <property type="entry name" value="Uncharacterised_ApaG"/>
</dbReference>
<dbReference type="NCBIfam" id="NF003967">
    <property type="entry name" value="PRK05461.1"/>
    <property type="match status" value="1"/>
</dbReference>
<dbReference type="PANTHER" id="PTHR14289">
    <property type="entry name" value="F-BOX ONLY PROTEIN 3"/>
    <property type="match status" value="1"/>
</dbReference>
<dbReference type="PANTHER" id="PTHR14289:SF16">
    <property type="entry name" value="POLYMERASE DELTA-INTERACTING PROTEIN 2"/>
    <property type="match status" value="1"/>
</dbReference>
<dbReference type="Pfam" id="PF04379">
    <property type="entry name" value="DUF525"/>
    <property type="match status" value="1"/>
</dbReference>
<dbReference type="SUPFAM" id="SSF110069">
    <property type="entry name" value="ApaG-like"/>
    <property type="match status" value="1"/>
</dbReference>
<dbReference type="PROSITE" id="PS51087">
    <property type="entry name" value="APAG"/>
    <property type="match status" value="1"/>
</dbReference>
<name>APAG_XYLFM</name>